<keyword id="KW-0472">Membrane</keyword>
<keyword id="KW-0812">Transmembrane</keyword>
<keyword id="KW-1133">Transmembrane helix</keyword>
<accession>A0A384XG60</accession>
<protein>
    <recommendedName>
        <fullName evidence="7">Strobilurin A biosynthesis cluster protein r1</fullName>
    </recommendedName>
</protein>
<feature type="chain" id="PRO_0000449329" description="Strobilurin A biosynthesis cluster protein r1">
    <location>
        <begin position="1"/>
        <end position="207"/>
    </location>
</feature>
<feature type="transmembrane region" description="Helical" evidence="1">
    <location>
        <begin position="108"/>
        <end position="128"/>
    </location>
</feature>
<feature type="transmembrane region" description="Helical" evidence="1">
    <location>
        <begin position="169"/>
        <end position="189"/>
    </location>
</feature>
<name>STR1_STRTC</name>
<sequence>MAQVVADPIVDKSAILKSELSKQPETLIAYAKWYGKVAGPITGVDLSAIDAKSLTLICTLSDGSKQQVRIELSPPLARYEDAKPRLLEMKTRALEGLGLTKTPVITNFIFPSLALKTTIWSVAGLLYLTFVPNPYLTGANIPRAWAAVGLIHGPQAIYTATLARKHVGNLTTGVSYVLGTLVFGFPFWIDLRQRITAARVESVAKIQ</sequence>
<reference key="1">
    <citation type="journal article" date="2018" name="Nat. Commun.">
        <title>Strobilurin biosynthesis in Basidiomycete fungi.</title>
        <authorList>
            <person name="Nofiani R."/>
            <person name="de Mattos-Shipley K."/>
            <person name="Lebe K.E."/>
            <person name="Han L.C."/>
            <person name="Iqbal Z."/>
            <person name="Bailey A.M."/>
            <person name="Willis C.L."/>
            <person name="Simpson T.J."/>
            <person name="Cox R.J."/>
        </authorList>
    </citation>
    <scope>NUCLEOTIDE SEQUENCE [GENOMIC DNA]</scope>
    <scope>INDUCTION</scope>
    <scope>FUNCTION</scope>
    <scope>BIOTECHNOLOGY</scope>
    <source>
        <strain>CBS 621.79</strain>
    </source>
</reference>
<reference key="2">
    <citation type="journal article" date="1977" name="J. Antibiot.">
        <title>The strobilurins--new antifungal antibiotics from the basidiomycete Strobilurus tenacellus.</title>
        <authorList>
            <person name="Anke T."/>
            <person name="Oberwinkler F."/>
            <person name="Steglich W."/>
            <person name="Schramm G."/>
        </authorList>
    </citation>
    <scope>BIOTECHNOLOGY</scope>
</reference>
<reference key="3">
    <citation type="journal article" date="1981" name="FEBS Lett.">
        <title>Oudemansin, strobilurin A, strobilurin B and myxothiazol: new inhibitors of the bc1 segment of the respiratory chain with an E-beta-methoxyacrylate system as common structural element.</title>
        <authorList>
            <person name="Becker W.F."/>
            <person name="von Jagow G."/>
            <person name="Anke T."/>
            <person name="Steglich W."/>
        </authorList>
    </citation>
    <scope>BIOTECHNOLOGY</scope>
</reference>
<reference key="4">
    <citation type="journal article" date="1999" name="Angew. Chem. Int. Ed.">
        <title>Strobilurins: evolution of a new class of active substances.</title>
        <authorList>
            <person name="Sauter H."/>
            <person name="Steglich W."/>
            <person name="Anke T."/>
        </authorList>
    </citation>
    <scope>REVIEW ON BIOTECHNOLOGY</scope>
</reference>
<reference key="5">
    <citation type="journal article" date="2002" name="Pest Manag. Sci.">
        <title>The strobilurin fungicides.</title>
        <authorList>
            <person name="Bartlett D.W."/>
            <person name="Clough J.M."/>
            <person name="Godwin J.R."/>
            <person name="Hall A.A."/>
            <person name="Hamer M."/>
            <person name="Parr-Dobrzanski B."/>
        </authorList>
    </citation>
    <scope>REVIEW ON BIOTECHNOLOGY</scope>
</reference>
<evidence type="ECO:0000255" key="1"/>
<evidence type="ECO:0000269" key="2">
    <source>
    </source>
</evidence>
<evidence type="ECO:0000269" key="3">
    <source>
    </source>
</evidence>
<evidence type="ECO:0000269" key="4">
    <source>
    </source>
</evidence>
<evidence type="ECO:0000303" key="5">
    <source>
    </source>
</evidence>
<evidence type="ECO:0000303" key="6">
    <source>
    </source>
</evidence>
<evidence type="ECO:0000303" key="7">
    <source>
    </source>
</evidence>
<evidence type="ECO:0000305" key="8">
    <source>
    </source>
</evidence>
<organism>
    <name type="scientific">Strobilurus tenacellus</name>
    <dbReference type="NCBI Taxonomy" id="41251"/>
    <lineage>
        <taxon>Eukaryota</taxon>
        <taxon>Fungi</taxon>
        <taxon>Dikarya</taxon>
        <taxon>Basidiomycota</taxon>
        <taxon>Agaricomycotina</taxon>
        <taxon>Agaricomycetes</taxon>
        <taxon>Agaricomycetidae</taxon>
        <taxon>Agaricales</taxon>
        <taxon>Marasmiineae</taxon>
        <taxon>Physalacriaceae</taxon>
        <taxon>Strobilurus</taxon>
    </lineage>
</organism>
<dbReference type="EMBL" id="KY070339">
    <property type="protein sequence ID" value="ATV82111.1"/>
    <property type="molecule type" value="Genomic_DNA"/>
</dbReference>
<dbReference type="SMR" id="A0A384XG60"/>
<dbReference type="GO" id="GO:0016020">
    <property type="term" value="C:membrane"/>
    <property type="evidence" value="ECO:0007669"/>
    <property type="project" value="UniProtKB-SubCell"/>
</dbReference>
<dbReference type="Gene3D" id="3.20.180.10">
    <property type="entry name" value="PNP-oxidase-like"/>
    <property type="match status" value="1"/>
</dbReference>
<dbReference type="InterPro" id="IPR019595">
    <property type="entry name" value="DUF2470"/>
</dbReference>
<dbReference type="InterPro" id="IPR037119">
    <property type="entry name" value="Haem_oxidase_HugZ-like_sf"/>
</dbReference>
<dbReference type="Pfam" id="PF10615">
    <property type="entry name" value="DUF2470"/>
    <property type="match status" value="1"/>
</dbReference>
<proteinExistence type="evidence at protein level"/>
<gene>
    <name evidence="7" type="primary">str1</name>
</gene>
<comment type="function">
    <text evidence="2 8">Part of the gene cluster that mediates the biosynthesis of strobilurin A, an antifungal polyketide that contains a key beta-methoxyacrylate toxophore that targets the complex III of the mitochondrial electron transport chain (PubMed:30258052). Strobilurin biosynthesis begins with construction of benzoyl CoA by step-wise elimination of ammonia from phenylalanine by the phenylalanine ammonia-lyase str11, oxygenation by str8 and retro-Claisen reaction to form benzoic acid, which is activated to its CoA thiolester benzoyl CoA by the dedicated CoA ligase str10 (PubMed:30258052). Benzoyl CoA forms the starter unit for the highly reducing polyketide synthase stpks1 that produces the polyketide prestrobilutin A (PubMed:30258052). The FAD-dependent oxygenase str9 then catalyzes the key oxidative rearrangement responsible for the creation of the beta-methoxyacrylate toxophore (PubMed:30258052). Str9 performs epoxidation of the 2,3 olefin of prestrobilutin A, followed by Meinwald rearrangement to furnish the aldehyde intermediate (Probable). Rapid enolization of the aldehyde intermediate would give the beta-methoxyacrylate skeleton and methylations catalyzed by str2 and str3 complete the synthesis and lead to the production of strobilurin A (Probable). The short-chain dehydrogenase stl2 and the dehydrogenase str4 play a role in the shunt pathway leading to the production of bolineol (PubMed:30258052). The cluster encodes no obvious halogenase gene that could be involved in production of strobilurin B, nor any obvious dimethylallyl-transferase that could be involved in the production of strobilurin G (Probable). It is possible that unknown proteins encoded in, or near, the cluster (such as str1 or stl1) may form new classes of halogenases or dimethylally-transferases, or that the responsible genes are located elsewhere on the genome (Probable). Similarly, proteins encoded by str5/str6 hydrolases appear to have no chemical role in the biosynthesis of strobilurin A (Probable). Finally, no obvious self-resistance gene is found within the cluster (Probable).</text>
</comment>
<comment type="pathway">
    <text evidence="8">Mycotoxin biosynthesis.</text>
</comment>
<comment type="subcellular location">
    <subcellularLocation>
        <location evidence="1">Membrane</location>
        <topology evidence="1">Multi-pass membrane protein</topology>
    </subcellularLocation>
</comment>
<comment type="induction">
    <text evidence="2">Induced in strobilurin-producing conditions (on CGC medium after 6 days of growth).</text>
</comment>
<comment type="biotechnology">
    <text evidence="3 4 5 6 7">The structure of strobilurin A was used for the development of the major class of beta-methoxyacrylate agricultural fungicides since its beta-methoxyacrylate toxophore targets the Qo site of complex III of the mitochondrial electron transport chain and prevents adenosine triphosphate synthesis (PubMed:563391, PubMed:6271595). Compounds such as azoxystrobin (Syngenta) and Kresoxim methyl (BASF) are among the most widely used fungicides worldwide (PubMed:12146165, PubMed:29711574). This class of antifungals are used as effective treatments against a broad range of destructive fungal plant pathogens and make significant contributions to food security (PubMed:12146165, PubMed:29711574). The strobilurin fungicides are estimated to have been worth 3.4 billion dollars in 2015 and they make up 25% of the fungicide market and 6.7% of the total crop protection market (PubMed:30258052).</text>
</comment>